<feature type="chain" id="PRO_1000023348" description="DNA-binding protein Fis">
    <location>
        <begin position="1"/>
        <end position="98"/>
    </location>
</feature>
<feature type="DNA-binding region" description="H-T-H motif" evidence="1">
    <location>
        <begin position="74"/>
        <end position="93"/>
    </location>
</feature>
<comment type="function">
    <text evidence="1">Activates ribosomal RNA transcription. Plays a direct role in upstream activation of rRNA promoters.</text>
</comment>
<comment type="subunit">
    <text evidence="1">Homodimer.</text>
</comment>
<comment type="similarity">
    <text evidence="1">Belongs to the transcriptional regulatory Fis family.</text>
</comment>
<accession>Q3YWY8</accession>
<reference key="1">
    <citation type="journal article" date="2005" name="Nucleic Acids Res.">
        <title>Genome dynamics and diversity of Shigella species, the etiologic agents of bacillary dysentery.</title>
        <authorList>
            <person name="Yang F."/>
            <person name="Yang J."/>
            <person name="Zhang X."/>
            <person name="Chen L."/>
            <person name="Jiang Y."/>
            <person name="Yan Y."/>
            <person name="Tang X."/>
            <person name="Wang J."/>
            <person name="Xiong Z."/>
            <person name="Dong J."/>
            <person name="Xue Y."/>
            <person name="Zhu Y."/>
            <person name="Xu X."/>
            <person name="Sun L."/>
            <person name="Chen S."/>
            <person name="Nie H."/>
            <person name="Peng J."/>
            <person name="Xu J."/>
            <person name="Wang Y."/>
            <person name="Yuan Z."/>
            <person name="Wen Y."/>
            <person name="Yao Z."/>
            <person name="Shen Y."/>
            <person name="Qiang B."/>
            <person name="Hou Y."/>
            <person name="Yu J."/>
            <person name="Jin Q."/>
        </authorList>
    </citation>
    <scope>NUCLEOTIDE SEQUENCE [LARGE SCALE GENOMIC DNA]</scope>
    <source>
        <strain>Ss046</strain>
    </source>
</reference>
<name>FIS_SHISS</name>
<gene>
    <name evidence="1" type="primary">fis</name>
    <name type="ordered locus">SSON_3402</name>
</gene>
<sequence>MFEQRVNSDVLTVSTVNSQDQVTQKPLRDSVKQALKNYFAQLNGQDVNDLYELVLAEVEQPLLDMVMQYTRGNQTRAALMMGINRGTLRKKLKKYGMN</sequence>
<proteinExistence type="inferred from homology"/>
<protein>
    <recommendedName>
        <fullName evidence="1">DNA-binding protein Fis</fullName>
    </recommendedName>
</protein>
<dbReference type="EMBL" id="CP000038">
    <property type="protein sequence ID" value="AAZ89974.1"/>
    <property type="molecule type" value="Genomic_DNA"/>
</dbReference>
<dbReference type="RefSeq" id="WP_000462905.1">
    <property type="nucleotide sequence ID" value="NC_007384.1"/>
</dbReference>
<dbReference type="SMR" id="Q3YWY8"/>
<dbReference type="GeneID" id="98390389"/>
<dbReference type="KEGG" id="ssn:SSON_3402"/>
<dbReference type="HOGENOM" id="CLU_158040_3_0_6"/>
<dbReference type="Proteomes" id="UP000002529">
    <property type="component" value="Chromosome"/>
</dbReference>
<dbReference type="GO" id="GO:0003700">
    <property type="term" value="F:DNA-binding transcription factor activity"/>
    <property type="evidence" value="ECO:0007669"/>
    <property type="project" value="UniProtKB-UniRule"/>
</dbReference>
<dbReference type="GO" id="GO:0043565">
    <property type="term" value="F:sequence-specific DNA binding"/>
    <property type="evidence" value="ECO:0007669"/>
    <property type="project" value="InterPro"/>
</dbReference>
<dbReference type="FunFam" id="1.10.10.60:FF:000006">
    <property type="entry name" value="DNA-binding protein Fis"/>
    <property type="match status" value="1"/>
</dbReference>
<dbReference type="Gene3D" id="1.10.10.60">
    <property type="entry name" value="Homeodomain-like"/>
    <property type="match status" value="1"/>
</dbReference>
<dbReference type="HAMAP" id="MF_00166">
    <property type="entry name" value="DNA_binding_Fis"/>
    <property type="match status" value="1"/>
</dbReference>
<dbReference type="InterPro" id="IPR005412">
    <property type="entry name" value="Fis_DNA-bd"/>
</dbReference>
<dbReference type="InterPro" id="IPR009057">
    <property type="entry name" value="Homeodomain-like_sf"/>
</dbReference>
<dbReference type="InterPro" id="IPR002197">
    <property type="entry name" value="HTH_Fis"/>
</dbReference>
<dbReference type="InterPro" id="IPR050207">
    <property type="entry name" value="Trans_regulatory_Fis"/>
</dbReference>
<dbReference type="NCBIfam" id="NF001659">
    <property type="entry name" value="PRK00430.1"/>
    <property type="match status" value="1"/>
</dbReference>
<dbReference type="PANTHER" id="PTHR47918">
    <property type="entry name" value="DNA-BINDING PROTEIN FIS"/>
    <property type="match status" value="1"/>
</dbReference>
<dbReference type="PANTHER" id="PTHR47918:SF1">
    <property type="entry name" value="DNA-BINDING PROTEIN FIS"/>
    <property type="match status" value="1"/>
</dbReference>
<dbReference type="Pfam" id="PF02954">
    <property type="entry name" value="HTH_8"/>
    <property type="match status" value="1"/>
</dbReference>
<dbReference type="PIRSF" id="PIRSF002097">
    <property type="entry name" value="DNA-binding_Fis"/>
    <property type="match status" value="1"/>
</dbReference>
<dbReference type="PRINTS" id="PR01591">
    <property type="entry name" value="DNABINDNGFIS"/>
</dbReference>
<dbReference type="PRINTS" id="PR01590">
    <property type="entry name" value="HTHFIS"/>
</dbReference>
<dbReference type="SUPFAM" id="SSF46689">
    <property type="entry name" value="Homeodomain-like"/>
    <property type="match status" value="1"/>
</dbReference>
<keyword id="KW-0010">Activator</keyword>
<keyword id="KW-0238">DNA-binding</keyword>
<keyword id="KW-1185">Reference proteome</keyword>
<keyword id="KW-0804">Transcription</keyword>
<keyword id="KW-0805">Transcription regulation</keyword>
<organism>
    <name type="scientific">Shigella sonnei (strain Ss046)</name>
    <dbReference type="NCBI Taxonomy" id="300269"/>
    <lineage>
        <taxon>Bacteria</taxon>
        <taxon>Pseudomonadati</taxon>
        <taxon>Pseudomonadota</taxon>
        <taxon>Gammaproteobacteria</taxon>
        <taxon>Enterobacterales</taxon>
        <taxon>Enterobacteriaceae</taxon>
        <taxon>Shigella</taxon>
    </lineage>
</organism>
<evidence type="ECO:0000255" key="1">
    <source>
        <dbReference type="HAMAP-Rule" id="MF_00166"/>
    </source>
</evidence>